<protein>
    <recommendedName>
        <fullName>Putative acetyl-hydrolase LipR</fullName>
        <ecNumber>3.1.1.-</ecNumber>
    </recommendedName>
</protein>
<proteinExistence type="evidence at protein level"/>
<accession>P9WK85</accession>
<accession>F2GNY4</accession>
<accession>L0TEI3</accession>
<accession>O53301</accession>
<accession>Q7D657</accession>
<name>LIPR_MYCTU</name>
<feature type="signal peptide" evidence="3">
    <location>
        <begin position="1"/>
        <end position="40"/>
    </location>
</feature>
<feature type="chain" id="PRO_0000420877" description="Putative acetyl-hydrolase LipR">
    <location>
        <begin position="41"/>
        <end position="308"/>
    </location>
</feature>
<feature type="short sequence motif" description="Involved in the stabilization of the negatively charged intermediate by the formation of the oxyanion hole" evidence="2">
    <location>
        <begin position="76"/>
        <end position="78"/>
    </location>
</feature>
<feature type="active site" evidence="1">
    <location>
        <position position="146"/>
    </location>
</feature>
<feature type="active site" evidence="1">
    <location>
        <position position="239"/>
    </location>
</feature>
<feature type="active site" evidence="1">
    <location>
        <position position="269"/>
    </location>
</feature>
<organism>
    <name type="scientific">Mycobacterium tuberculosis (strain ATCC 25618 / H37Rv)</name>
    <dbReference type="NCBI Taxonomy" id="83332"/>
    <lineage>
        <taxon>Bacteria</taxon>
        <taxon>Bacillati</taxon>
        <taxon>Actinomycetota</taxon>
        <taxon>Actinomycetes</taxon>
        <taxon>Mycobacteriales</taxon>
        <taxon>Mycobacteriaceae</taxon>
        <taxon>Mycobacterium</taxon>
        <taxon>Mycobacterium tuberculosis complex</taxon>
    </lineage>
</organism>
<reference key="1">
    <citation type="journal article" date="1998" name="Nature">
        <title>Deciphering the biology of Mycobacterium tuberculosis from the complete genome sequence.</title>
        <authorList>
            <person name="Cole S.T."/>
            <person name="Brosch R."/>
            <person name="Parkhill J."/>
            <person name="Garnier T."/>
            <person name="Churcher C.M."/>
            <person name="Harris D.E."/>
            <person name="Gordon S.V."/>
            <person name="Eiglmeier K."/>
            <person name="Gas S."/>
            <person name="Barry C.E. III"/>
            <person name="Tekaia F."/>
            <person name="Badcock K."/>
            <person name="Basham D."/>
            <person name="Brown D."/>
            <person name="Chillingworth T."/>
            <person name="Connor R."/>
            <person name="Davies R.M."/>
            <person name="Devlin K."/>
            <person name="Feltwell T."/>
            <person name="Gentles S."/>
            <person name="Hamlin N."/>
            <person name="Holroyd S."/>
            <person name="Hornsby T."/>
            <person name="Jagels K."/>
            <person name="Krogh A."/>
            <person name="McLean J."/>
            <person name="Moule S."/>
            <person name="Murphy L.D."/>
            <person name="Oliver S."/>
            <person name="Osborne J."/>
            <person name="Quail M.A."/>
            <person name="Rajandream M.A."/>
            <person name="Rogers J."/>
            <person name="Rutter S."/>
            <person name="Seeger K."/>
            <person name="Skelton S."/>
            <person name="Squares S."/>
            <person name="Squares R."/>
            <person name="Sulston J.E."/>
            <person name="Taylor K."/>
            <person name="Whitehead S."/>
            <person name="Barrell B.G."/>
        </authorList>
    </citation>
    <scope>NUCLEOTIDE SEQUENCE [LARGE SCALE GENOMIC DNA]</scope>
    <source>
        <strain>ATCC 25618 / H37Rv</strain>
    </source>
</reference>
<reference key="2">
    <citation type="journal article" date="2003" name="FEMS Microbiol. Lett.">
        <title>mymA operon of Mycobacterium tuberculosis: its regulation and importance in the cell envelope.</title>
        <authorList>
            <person name="Singh A."/>
            <person name="Jain S."/>
            <person name="Gupta S."/>
            <person name="Das T."/>
            <person name="Tyagi A.K."/>
        </authorList>
    </citation>
    <scope>INDUCTION</scope>
    <scope>GENE NAME</scope>
</reference>
<reference key="3">
    <citation type="journal article" date="2005" name="J. Bacteriol.">
        <title>Requirement of the mymA operon for appropriate cell wall ultrastructure and persistence of Mycobacterium tuberculosis in the spleens of guinea pigs.</title>
        <authorList>
            <person name="Singh A."/>
            <person name="Gupta R."/>
            <person name="Vishwakarma R.A."/>
            <person name="Narayanan P.R."/>
            <person name="Paramasivan C.N."/>
            <person name="Ramanathan V.D."/>
            <person name="Tyagi A.K."/>
        </authorList>
    </citation>
    <scope>FUNCTION</scope>
    <scope>DISRUPTION PHENOTYPE</scope>
    <source>
        <strain>Erdman</strain>
    </source>
</reference>
<reference key="4">
    <citation type="journal article" date="2007" name="Tuberculosis">
        <title>The acid-induced operon Rv3083-Rv3089 is required for growth of Mycobacterium tuberculosis in macrophages.</title>
        <authorList>
            <person name="Cheruvu M."/>
            <person name="Plikaytis B.B."/>
            <person name="Shinnick T.M."/>
        </authorList>
    </citation>
    <scope>DISRUPTION PHENOTYPE</scope>
    <source>
        <strain>ATCC 25618 / H37Rv</strain>
    </source>
</reference>
<reference key="5">
    <citation type="journal article" date="2011" name="Mol. Cell. Proteomics">
        <title>Proteogenomic analysis of Mycobacterium tuberculosis by high resolution mass spectrometry.</title>
        <authorList>
            <person name="Kelkar D.S."/>
            <person name="Kumar D."/>
            <person name="Kumar P."/>
            <person name="Balakrishnan L."/>
            <person name="Muthusamy B."/>
            <person name="Yadav A.K."/>
            <person name="Shrivastava P."/>
            <person name="Marimuthu A."/>
            <person name="Anand S."/>
            <person name="Sundaram H."/>
            <person name="Kingsbury R."/>
            <person name="Harsha H.C."/>
            <person name="Nair B."/>
            <person name="Prasad T.S."/>
            <person name="Chauhan D.S."/>
            <person name="Katoch K."/>
            <person name="Katoch V.M."/>
            <person name="Kumar P."/>
            <person name="Chaerkady R."/>
            <person name="Ramachandran S."/>
            <person name="Dash D."/>
            <person name="Pandey A."/>
        </authorList>
    </citation>
    <scope>IDENTIFICATION BY MASS SPECTROMETRY [LARGE SCALE ANALYSIS]</scope>
    <source>
        <strain>ATCC 25618 / H37Rv</strain>
    </source>
</reference>
<sequence>MNLRKNVIRSVLRGARPLFASRRLGIAGRRVLLATLTAGARAPKGTRFQRVSIAGVPVQRVQPPHAATSGTLIYLHGGAYALGSARGYRGLAAQLAAAAGMTALVPDYTRAPHAHYPVALEEMAAVYTRLLDDGLDPKTTVIAGDSAGGGLTLALAMALRDRGIQAPAALGLICPWADLAVDIEATRPALRDPLILPSMCTEWAPRYVGSSDPRLPGISPVYGDMSGLPPIVMQTAGDDPICVDADKIETACAASKTSIEHRRFAGMWHDFHLQVSLLPEARDAIADLGARLRGHLHQSQGQPRGVVK</sequence>
<dbReference type="EC" id="3.1.1.-"/>
<dbReference type="EMBL" id="AL123456">
    <property type="protein sequence ID" value="CCP45893.1"/>
    <property type="molecule type" value="Genomic_DNA"/>
</dbReference>
<dbReference type="PIR" id="H70852">
    <property type="entry name" value="H70852"/>
</dbReference>
<dbReference type="RefSeq" id="NP_217600.1">
    <property type="nucleotide sequence ID" value="NC_000962.3"/>
</dbReference>
<dbReference type="RefSeq" id="WP_003901538.1">
    <property type="nucleotide sequence ID" value="NZ_NVQJ01000011.1"/>
</dbReference>
<dbReference type="SMR" id="P9WK85"/>
<dbReference type="STRING" id="83332.Rv3084"/>
<dbReference type="ChEMBL" id="CHEMBL4105823"/>
<dbReference type="ESTHER" id="myctu-Rv3084">
    <property type="family name" value="Hormone-sensitive_lipase_like"/>
</dbReference>
<dbReference type="PaxDb" id="83332-Rv3084"/>
<dbReference type="DNASU" id="888652"/>
<dbReference type="GeneID" id="888652"/>
<dbReference type="KEGG" id="mtu:Rv3084"/>
<dbReference type="KEGG" id="mtv:RVBD_3084"/>
<dbReference type="TubercuList" id="Rv3084"/>
<dbReference type="eggNOG" id="COG0657">
    <property type="taxonomic scope" value="Bacteria"/>
</dbReference>
<dbReference type="InParanoid" id="P9WK85"/>
<dbReference type="OrthoDB" id="9803828at2"/>
<dbReference type="PhylomeDB" id="P9WK85"/>
<dbReference type="Proteomes" id="UP000001584">
    <property type="component" value="Chromosome"/>
</dbReference>
<dbReference type="GO" id="GO:0005886">
    <property type="term" value="C:plasma membrane"/>
    <property type="evidence" value="ECO:0007005"/>
    <property type="project" value="MTBBASE"/>
</dbReference>
<dbReference type="GO" id="GO:0004806">
    <property type="term" value="F:triacylglycerol lipase activity"/>
    <property type="evidence" value="ECO:0000318"/>
    <property type="project" value="GO_Central"/>
</dbReference>
<dbReference type="GO" id="GO:0051701">
    <property type="term" value="P:biological process involved in interaction with host"/>
    <property type="evidence" value="ECO:0000315"/>
    <property type="project" value="MTBBASE"/>
</dbReference>
<dbReference type="GO" id="GO:0010447">
    <property type="term" value="P:response to acidic pH"/>
    <property type="evidence" value="ECO:0000270"/>
    <property type="project" value="MTBBASE"/>
</dbReference>
<dbReference type="Gene3D" id="3.40.50.1820">
    <property type="entry name" value="alpha/beta hydrolase"/>
    <property type="match status" value="1"/>
</dbReference>
<dbReference type="InterPro" id="IPR013094">
    <property type="entry name" value="AB_hydrolase_3"/>
</dbReference>
<dbReference type="InterPro" id="IPR029058">
    <property type="entry name" value="AB_hydrolase_fold"/>
</dbReference>
<dbReference type="InterPro" id="IPR050300">
    <property type="entry name" value="GDXG_lipolytic_enzyme"/>
</dbReference>
<dbReference type="PANTHER" id="PTHR48081">
    <property type="entry name" value="AB HYDROLASE SUPERFAMILY PROTEIN C4A8.06C"/>
    <property type="match status" value="1"/>
</dbReference>
<dbReference type="PANTHER" id="PTHR48081:SF30">
    <property type="entry name" value="ACETYL-HYDROLASE LIPR-RELATED"/>
    <property type="match status" value="1"/>
</dbReference>
<dbReference type="Pfam" id="PF07859">
    <property type="entry name" value="Abhydrolase_3"/>
    <property type="match status" value="1"/>
</dbReference>
<dbReference type="SUPFAM" id="SSF53474">
    <property type="entry name" value="alpha/beta-Hydrolases"/>
    <property type="match status" value="1"/>
</dbReference>
<gene>
    <name type="primary">lipR</name>
    <name type="synonym">bah</name>
    <name type="ordered locus">Rv3084</name>
</gene>
<evidence type="ECO:0000250" key="1">
    <source>
        <dbReference type="UniProtKB" id="O06350"/>
    </source>
</evidence>
<evidence type="ECO:0000250" key="2">
    <source>
        <dbReference type="UniProtKB" id="Q5NUF3"/>
    </source>
</evidence>
<evidence type="ECO:0000255" key="3"/>
<evidence type="ECO:0000269" key="4">
    <source>
    </source>
</evidence>
<evidence type="ECO:0000269" key="5">
    <source>
    </source>
</evidence>
<evidence type="ECO:0000269" key="6">
    <source>
    </source>
</evidence>
<evidence type="ECO:0000305" key="7"/>
<keyword id="KW-0378">Hydrolase</keyword>
<keyword id="KW-1185">Reference proteome</keyword>
<keyword id="KW-0732">Signal</keyword>
<comment type="function">
    <text evidence="5">Required for maintaining the appropriate mycolic acid composition and permeability of the envelope on its exposure to acidic pH.</text>
</comment>
<comment type="induction">
    <text evidence="4">Expression is controlled by VirS. Induced at acidic pH and in macrophages.</text>
</comment>
<comment type="disruption phenotype">
    <text evidence="5 6">Inactivation of the mymA operon causes altered cell wall structure, reduced contents and altered composition of mycolic acids along with the accumulation of saturated C24 and C26 fatty acids, and enhanced susceptibility to antibiotics, detergents and acidic pH. Also impairs ability to survive in macrophages.</text>
</comment>
<comment type="similarity">
    <text evidence="7">Belongs to the 'GDXG' lipolytic enzyme family.</text>
</comment>